<feature type="chain" id="PRO_0000326318" description="Matrix protein 1">
    <location>
        <begin position="1"/>
        <end position="252"/>
    </location>
</feature>
<feature type="region of interest" description="Membrane-binding" evidence="1">
    <location>
        <begin position="1"/>
        <end position="164"/>
    </location>
</feature>
<feature type="region of interest" description="RNP-binding" evidence="1">
    <location>
        <begin position="165"/>
        <end position="252"/>
    </location>
</feature>
<feature type="short sequence motif" description="Nuclear localization signal" evidence="1">
    <location>
        <begin position="101"/>
        <end position="105"/>
    </location>
</feature>
<proteinExistence type="inferred from homology"/>
<accession>Q67185</accession>
<reference key="1">
    <citation type="journal article" date="1991" name="J. Virol.">
        <title>Evolutionary analysis of the influenza A virus M gene with comparison of the M1 and M2 proteins.</title>
        <authorList>
            <person name="Ito T."/>
            <person name="Gorman O.T."/>
            <person name="Kawaoka Y."/>
            <person name="Bean W.J."/>
            <person name="Webster R.G."/>
        </authorList>
    </citation>
    <scope>NUCLEOTIDE SEQUENCE [GENOMIC RNA]</scope>
</reference>
<protein>
    <recommendedName>
        <fullName evidence="1">Matrix protein 1</fullName>
        <shortName evidence="1">M1</shortName>
    </recommendedName>
</protein>
<sequence>MSLLTEVETYVLSIVPSGPLKAEIAQRLEDVFAGKNTDLEALMEWLKTRPILSPLTKGILGFVFTLTVPSERGLQRRRFVQNALNGNGDPNNMDRAVKLYRKLKREITFHGAKEVALSYSTGALASCMGLIYNRMGTVTTEVAFGLVCATCEQIADSQHRSHRQMVTTTNPLIRHENRMVLASHTAKAMEQMAGSSEQAAERMEVASQARQMVQAMRTIGTHPSSSAGLKDDLLENLQAYQKRMGVQMQRFK</sequence>
<organism>
    <name type="scientific">Influenza A virus (strain A/Swine/Hong Kong/127/1982 H3N2)</name>
    <dbReference type="NCBI Taxonomy" id="384483"/>
    <lineage>
        <taxon>Viruses</taxon>
        <taxon>Riboviria</taxon>
        <taxon>Orthornavirae</taxon>
        <taxon>Negarnaviricota</taxon>
        <taxon>Polyploviricotina</taxon>
        <taxon>Insthoviricetes</taxon>
        <taxon>Articulavirales</taxon>
        <taxon>Orthomyxoviridae</taxon>
        <taxon>Alphainfluenzavirus</taxon>
        <taxon>Alphainfluenzavirus influenzae</taxon>
        <taxon>Influenza A virus</taxon>
    </lineage>
</organism>
<name>M1_I82A7</name>
<comment type="function">
    <text evidence="1">Plays critical roles in virus replication, from virus entry and uncoating to assembly and budding of the virus particle. M1 binding to ribonucleocapsids (RNPs) in nucleus seems to inhibit viral transcription. Interaction of viral NEP with M1-RNP is thought to promote nuclear export of the complex, which is targeted to the virion assembly site at the apical plasma membrane in polarized epithelial cells. Interactions with NA and HA may bring M1, a non-raft-associated protein, into lipid rafts. Forms a continuous shell on the inner side of the lipid bilayer in virion, where it binds the RNP. During virus entry into cell, the M2 ion channel acidifies the internal virion core, inducing M1 dissociation from the RNP. M1-free RNPs are transported to the nucleus, where viral transcription and replication can take place.</text>
</comment>
<comment type="function">
    <text evidence="1">Determines the virion's shape: spherical or filamentous. Clinical isolates of influenza are characterized by the presence of significant proportion of filamentous virions, whereas after multiple passage on eggs or cell culture, virions have only spherical morphology. Filamentous virions are thought to be important to infect neighboring cells, and spherical virions more suited to spread through aerosol between hosts organisms.</text>
</comment>
<comment type="subunit">
    <text evidence="1">Homodimer and homomultimer. Interacts with NEP. Binds ribonucleocapsid by both interacting with genomic RNA and NP protein. May interact with HA and NA. Cannot bind NP without genomic RNA.</text>
</comment>
<comment type="subcellular location">
    <subcellularLocation>
        <location evidence="1">Virion membrane</location>
        <topology evidence="1">Peripheral membrane protein</topology>
        <orientation evidence="1">Cytoplasmic side</orientation>
    </subcellularLocation>
    <subcellularLocation>
        <location evidence="1">Host nucleus</location>
    </subcellularLocation>
</comment>
<comment type="alternative products">
    <event type="alternative splicing"/>
    <isoform>
        <id>Q67185-1</id>
        <name>M1</name>
        <sequence type="displayed"/>
    </isoform>
    <isoform>
        <id>Q76V06-1</id>
        <name>M2</name>
        <sequence type="external"/>
    </isoform>
    <text>Only the first 9 residues are shared by the 2 isoforms.</text>
</comment>
<comment type="miscellaneous">
    <text evidence="1">Most abundant protein in virion. When expressed alone can form virus-like particles in transfected cells.</text>
</comment>
<comment type="similarity">
    <text evidence="1">Belongs to the influenza viruses Matrix protein M1 family.</text>
</comment>
<evidence type="ECO:0000255" key="1">
    <source>
        <dbReference type="HAMAP-Rule" id="MF_04068"/>
    </source>
</evidence>
<keyword id="KW-0025">Alternative splicing</keyword>
<keyword id="KW-1048">Host nucleus</keyword>
<keyword id="KW-0472">Membrane</keyword>
<keyword id="KW-0694">RNA-binding</keyword>
<keyword id="KW-0468">Viral matrix protein</keyword>
<keyword id="KW-0946">Virion</keyword>
<dbReference type="EMBL" id="M63524">
    <property type="protein sequence ID" value="AAA43316.1"/>
    <property type="molecule type" value="Genomic_RNA"/>
</dbReference>
<dbReference type="SMR" id="Q67185"/>
<dbReference type="GO" id="GO:0042025">
    <property type="term" value="C:host cell nucleus"/>
    <property type="evidence" value="ECO:0007669"/>
    <property type="project" value="UniProtKB-SubCell"/>
</dbReference>
<dbReference type="GO" id="GO:0016020">
    <property type="term" value="C:membrane"/>
    <property type="evidence" value="ECO:0007669"/>
    <property type="project" value="UniProtKB-KW"/>
</dbReference>
<dbReference type="GO" id="GO:0055036">
    <property type="term" value="C:virion membrane"/>
    <property type="evidence" value="ECO:0007669"/>
    <property type="project" value="UniProtKB-SubCell"/>
</dbReference>
<dbReference type="GO" id="GO:0003723">
    <property type="term" value="F:RNA binding"/>
    <property type="evidence" value="ECO:0007669"/>
    <property type="project" value="UniProtKB-UniRule"/>
</dbReference>
<dbReference type="GO" id="GO:0039660">
    <property type="term" value="F:structural constituent of virion"/>
    <property type="evidence" value="ECO:0007669"/>
    <property type="project" value="UniProtKB-UniRule"/>
</dbReference>
<dbReference type="GO" id="GO:0046761">
    <property type="term" value="P:viral budding from plasma membrane"/>
    <property type="evidence" value="ECO:0007669"/>
    <property type="project" value="UniProtKB-UniRule"/>
</dbReference>
<dbReference type="FunFam" id="1.10.10.180:FF:000001">
    <property type="entry name" value="Matrix protein 1"/>
    <property type="match status" value="1"/>
</dbReference>
<dbReference type="FunFam" id="1.20.91.10:FF:000001">
    <property type="entry name" value="Matrix protein 1"/>
    <property type="match status" value="1"/>
</dbReference>
<dbReference type="Gene3D" id="1.10.10.180">
    <property type="match status" value="1"/>
</dbReference>
<dbReference type="Gene3D" id="1.20.91.10">
    <property type="match status" value="1"/>
</dbReference>
<dbReference type="HAMAP" id="MF_04068">
    <property type="entry name" value="INFV_M1"/>
    <property type="match status" value="1"/>
</dbReference>
<dbReference type="InterPro" id="IPR036039">
    <property type="entry name" value="Flu_matrix_M1"/>
</dbReference>
<dbReference type="InterPro" id="IPR013188">
    <property type="entry name" value="Flu_matrix_M1_C"/>
</dbReference>
<dbReference type="InterPro" id="IPR001561">
    <property type="entry name" value="Flu_matrix_M1_N"/>
</dbReference>
<dbReference type="InterPro" id="IPR015423">
    <property type="entry name" value="Flu_matrix_M1_N_sub1"/>
</dbReference>
<dbReference type="InterPro" id="IPR015799">
    <property type="entry name" value="Flu_matrix_M1_N_sub2"/>
</dbReference>
<dbReference type="InterPro" id="IPR037533">
    <property type="entry name" value="INFV_M1"/>
</dbReference>
<dbReference type="Pfam" id="PF00598">
    <property type="entry name" value="Flu_M1"/>
    <property type="match status" value="1"/>
</dbReference>
<dbReference type="Pfam" id="PF08289">
    <property type="entry name" value="Flu_M1_C"/>
    <property type="match status" value="1"/>
</dbReference>
<dbReference type="SMART" id="SM00759">
    <property type="entry name" value="Flu_M1_C"/>
    <property type="match status" value="1"/>
</dbReference>
<dbReference type="SUPFAM" id="SSF48145">
    <property type="entry name" value="Influenza virus matrix protein M1"/>
    <property type="match status" value="1"/>
</dbReference>
<organismHost>
    <name type="scientific">Aves</name>
    <dbReference type="NCBI Taxonomy" id="8782"/>
</organismHost>
<organismHost>
    <name type="scientific">Cetacea</name>
    <name type="common">whales</name>
    <dbReference type="NCBI Taxonomy" id="9721"/>
</organismHost>
<organismHost>
    <name type="scientific">Homo sapiens</name>
    <name type="common">Human</name>
    <dbReference type="NCBI Taxonomy" id="9606"/>
</organismHost>
<organismHost>
    <name type="scientific">Phocidae</name>
    <name type="common">true seals</name>
    <dbReference type="NCBI Taxonomy" id="9709"/>
</organismHost>
<organismHost>
    <name type="scientific">Sus scrofa</name>
    <name type="common">Pig</name>
    <dbReference type="NCBI Taxonomy" id="9823"/>
</organismHost>
<gene>
    <name evidence="1" type="primary">M</name>
</gene>